<feature type="chain" id="PRO_1000024791" description="Ribonuclease PH">
    <location>
        <begin position="1"/>
        <end position="243"/>
    </location>
</feature>
<feature type="binding site" evidence="1">
    <location>
        <position position="91"/>
    </location>
    <ligand>
        <name>phosphate</name>
        <dbReference type="ChEBI" id="CHEBI:43474"/>
        <note>substrate</note>
    </ligand>
</feature>
<feature type="binding site" evidence="1">
    <location>
        <begin position="129"/>
        <end position="131"/>
    </location>
    <ligand>
        <name>phosphate</name>
        <dbReference type="ChEBI" id="CHEBI:43474"/>
        <note>substrate</note>
    </ligand>
</feature>
<name>RNPH_BURTA</name>
<evidence type="ECO:0000255" key="1">
    <source>
        <dbReference type="HAMAP-Rule" id="MF_00564"/>
    </source>
</evidence>
<keyword id="KW-0548">Nucleotidyltransferase</keyword>
<keyword id="KW-0694">RNA-binding</keyword>
<keyword id="KW-0698">rRNA processing</keyword>
<keyword id="KW-0808">Transferase</keyword>
<keyword id="KW-0819">tRNA processing</keyword>
<keyword id="KW-0820">tRNA-binding</keyword>
<proteinExistence type="inferred from homology"/>
<gene>
    <name evidence="1" type="primary">rph</name>
    <name type="ordered locus">BTH_I1584</name>
</gene>
<accession>Q2SY74</accession>
<organism>
    <name type="scientific">Burkholderia thailandensis (strain ATCC 700388 / DSM 13276 / CCUG 48851 / CIP 106301 / E264)</name>
    <dbReference type="NCBI Taxonomy" id="271848"/>
    <lineage>
        <taxon>Bacteria</taxon>
        <taxon>Pseudomonadati</taxon>
        <taxon>Pseudomonadota</taxon>
        <taxon>Betaproteobacteria</taxon>
        <taxon>Burkholderiales</taxon>
        <taxon>Burkholderiaceae</taxon>
        <taxon>Burkholderia</taxon>
        <taxon>pseudomallei group</taxon>
    </lineage>
</organism>
<sequence>MTNSSPRPSGRRADQLRDVRITRHYTKHAEGSVLVEFGETKVICTASVVERVPEFLRERGQGWLTAEYGMLPRATHTRSDREAARGKQTGRTQEIQRLIGRALRAVFDLNALGPRTLHLDCDVIQADGGTRTASITGAFVAAHDAVTKLVAAGKIARSPITDYVAAISVGVFGGAPVLDLDYDEDSACDTDMNVVMTGAGGFVEVQGTAEGVPFSRAEMNALLDLAQAGIGELVRLQRAALEA</sequence>
<reference key="1">
    <citation type="journal article" date="2005" name="BMC Genomics">
        <title>Bacterial genome adaptation to niches: divergence of the potential virulence genes in three Burkholderia species of different survival strategies.</title>
        <authorList>
            <person name="Kim H.S."/>
            <person name="Schell M.A."/>
            <person name="Yu Y."/>
            <person name="Ulrich R.L."/>
            <person name="Sarria S.H."/>
            <person name="Nierman W.C."/>
            <person name="DeShazer D."/>
        </authorList>
    </citation>
    <scope>NUCLEOTIDE SEQUENCE [LARGE SCALE GENOMIC DNA]</scope>
    <source>
        <strain>ATCC 700388 / DSM 13276 / CCUG 48851 / CIP 106301 / E264</strain>
    </source>
</reference>
<comment type="function">
    <text evidence="1">Phosphorolytic 3'-5' exoribonuclease that plays an important role in tRNA 3'-end maturation. Removes nucleotide residues following the 3'-CCA terminus of tRNAs; can also add nucleotides to the ends of RNA molecules by using nucleoside diphosphates as substrates, but this may not be physiologically important. Probably plays a role in initiation of 16S rRNA degradation (leading to ribosome degradation) during starvation.</text>
</comment>
<comment type="catalytic activity">
    <reaction evidence="1">
        <text>tRNA(n+1) + phosphate = tRNA(n) + a ribonucleoside 5'-diphosphate</text>
        <dbReference type="Rhea" id="RHEA:10628"/>
        <dbReference type="Rhea" id="RHEA-COMP:17343"/>
        <dbReference type="Rhea" id="RHEA-COMP:17344"/>
        <dbReference type="ChEBI" id="CHEBI:43474"/>
        <dbReference type="ChEBI" id="CHEBI:57930"/>
        <dbReference type="ChEBI" id="CHEBI:173114"/>
        <dbReference type="EC" id="2.7.7.56"/>
    </reaction>
</comment>
<comment type="subunit">
    <text evidence="1">Homohexameric ring arranged as a trimer of dimers.</text>
</comment>
<comment type="similarity">
    <text evidence="1">Belongs to the RNase PH family.</text>
</comment>
<dbReference type="EC" id="2.7.7.56" evidence="1"/>
<dbReference type="EMBL" id="CP000086">
    <property type="protein sequence ID" value="ABC37325.1"/>
    <property type="molecule type" value="Genomic_DNA"/>
</dbReference>
<dbReference type="RefSeq" id="WP_009889746.1">
    <property type="nucleotide sequence ID" value="NZ_CP008785.1"/>
</dbReference>
<dbReference type="SMR" id="Q2SY74"/>
<dbReference type="GeneID" id="45121319"/>
<dbReference type="KEGG" id="bte:BTH_I1584"/>
<dbReference type="HOGENOM" id="CLU_050858_0_0_4"/>
<dbReference type="Proteomes" id="UP000001930">
    <property type="component" value="Chromosome I"/>
</dbReference>
<dbReference type="GO" id="GO:0000175">
    <property type="term" value="F:3'-5'-RNA exonuclease activity"/>
    <property type="evidence" value="ECO:0007669"/>
    <property type="project" value="UniProtKB-UniRule"/>
</dbReference>
<dbReference type="GO" id="GO:0000049">
    <property type="term" value="F:tRNA binding"/>
    <property type="evidence" value="ECO:0007669"/>
    <property type="project" value="UniProtKB-UniRule"/>
</dbReference>
<dbReference type="GO" id="GO:0009022">
    <property type="term" value="F:tRNA nucleotidyltransferase activity"/>
    <property type="evidence" value="ECO:0007669"/>
    <property type="project" value="UniProtKB-UniRule"/>
</dbReference>
<dbReference type="GO" id="GO:0016075">
    <property type="term" value="P:rRNA catabolic process"/>
    <property type="evidence" value="ECO:0007669"/>
    <property type="project" value="UniProtKB-UniRule"/>
</dbReference>
<dbReference type="GO" id="GO:0006364">
    <property type="term" value="P:rRNA processing"/>
    <property type="evidence" value="ECO:0007669"/>
    <property type="project" value="UniProtKB-KW"/>
</dbReference>
<dbReference type="GO" id="GO:0008033">
    <property type="term" value="P:tRNA processing"/>
    <property type="evidence" value="ECO:0007669"/>
    <property type="project" value="UniProtKB-UniRule"/>
</dbReference>
<dbReference type="CDD" id="cd11362">
    <property type="entry name" value="RNase_PH_bact"/>
    <property type="match status" value="1"/>
</dbReference>
<dbReference type="FunFam" id="3.30.230.70:FF:000003">
    <property type="entry name" value="Ribonuclease PH"/>
    <property type="match status" value="1"/>
</dbReference>
<dbReference type="Gene3D" id="3.30.230.70">
    <property type="entry name" value="GHMP Kinase, N-terminal domain"/>
    <property type="match status" value="1"/>
</dbReference>
<dbReference type="HAMAP" id="MF_00564">
    <property type="entry name" value="RNase_PH"/>
    <property type="match status" value="1"/>
</dbReference>
<dbReference type="InterPro" id="IPR001247">
    <property type="entry name" value="ExoRNase_PH_dom1"/>
</dbReference>
<dbReference type="InterPro" id="IPR015847">
    <property type="entry name" value="ExoRNase_PH_dom2"/>
</dbReference>
<dbReference type="InterPro" id="IPR036345">
    <property type="entry name" value="ExoRNase_PH_dom2_sf"/>
</dbReference>
<dbReference type="InterPro" id="IPR027408">
    <property type="entry name" value="PNPase/RNase_PH_dom_sf"/>
</dbReference>
<dbReference type="InterPro" id="IPR020568">
    <property type="entry name" value="Ribosomal_Su5_D2-typ_SF"/>
</dbReference>
<dbReference type="InterPro" id="IPR050080">
    <property type="entry name" value="RNase_PH"/>
</dbReference>
<dbReference type="InterPro" id="IPR002381">
    <property type="entry name" value="RNase_PH_bac-type"/>
</dbReference>
<dbReference type="InterPro" id="IPR018336">
    <property type="entry name" value="RNase_PH_CS"/>
</dbReference>
<dbReference type="NCBIfam" id="TIGR01966">
    <property type="entry name" value="RNasePH"/>
    <property type="match status" value="1"/>
</dbReference>
<dbReference type="PANTHER" id="PTHR11953">
    <property type="entry name" value="EXOSOME COMPLEX COMPONENT"/>
    <property type="match status" value="1"/>
</dbReference>
<dbReference type="PANTHER" id="PTHR11953:SF0">
    <property type="entry name" value="EXOSOME COMPLEX COMPONENT RRP41"/>
    <property type="match status" value="1"/>
</dbReference>
<dbReference type="Pfam" id="PF01138">
    <property type="entry name" value="RNase_PH"/>
    <property type="match status" value="1"/>
</dbReference>
<dbReference type="Pfam" id="PF03725">
    <property type="entry name" value="RNase_PH_C"/>
    <property type="match status" value="1"/>
</dbReference>
<dbReference type="SUPFAM" id="SSF55666">
    <property type="entry name" value="Ribonuclease PH domain 2-like"/>
    <property type="match status" value="1"/>
</dbReference>
<dbReference type="SUPFAM" id="SSF54211">
    <property type="entry name" value="Ribosomal protein S5 domain 2-like"/>
    <property type="match status" value="1"/>
</dbReference>
<dbReference type="PROSITE" id="PS01277">
    <property type="entry name" value="RIBONUCLEASE_PH"/>
    <property type="match status" value="1"/>
</dbReference>
<protein>
    <recommendedName>
        <fullName evidence="1">Ribonuclease PH</fullName>
        <shortName evidence="1">RNase PH</shortName>
        <ecNumber evidence="1">2.7.7.56</ecNumber>
    </recommendedName>
    <alternativeName>
        <fullName evidence="1">tRNA nucleotidyltransferase</fullName>
    </alternativeName>
</protein>